<sequence length="346" mass="40341">MDVLELIHTTVLGLNKDIDLSETKIYGFLIENSLTEIIEVSKRKNPGSLLNIITGCYEMIWKNHMDVIYNFITGDSSQIEDQAICLLAVKKNDIDIVKIFAEKGFDFNIELKKGSNMFYTYSIINSILEFNSVDLLKYLVENRLINDSKLSKNKYFYVYESTHLLDLLLDNYFFDTKNDQSEVIRSYLQNNICLNINTDILLKLIRLPHDINKIVLEDTHGYIFYSVANKKNSKQEIKSKLDLVISMGFNKIKELLDLLCMSQDEFCILISCILDMGYQLSTENKYNLLVKIRPNIIDLFYEHNIDLSNCHFTVPEIINKYLNKLNSLGLDNHTTCKLLMDKYFRF</sequence>
<gene>
    <name type="ordered locus">MIMI_L146</name>
</gene>
<proteinExistence type="predicted"/>
<protein>
    <recommendedName>
        <fullName>Uncharacterized protein L146</fullName>
    </recommendedName>
</protein>
<organismHost>
    <name type="scientific">Acanthamoeba polyphaga</name>
    <name type="common">Amoeba</name>
    <dbReference type="NCBI Taxonomy" id="5757"/>
</organismHost>
<accession>Q5URA2</accession>
<organism>
    <name type="scientific">Acanthamoeba polyphaga mimivirus</name>
    <name type="common">APMV</name>
    <dbReference type="NCBI Taxonomy" id="212035"/>
    <lineage>
        <taxon>Viruses</taxon>
        <taxon>Varidnaviria</taxon>
        <taxon>Bamfordvirae</taxon>
        <taxon>Nucleocytoviricota</taxon>
        <taxon>Megaviricetes</taxon>
        <taxon>Imitervirales</taxon>
        <taxon>Mimiviridae</taxon>
        <taxon>Megamimivirinae</taxon>
        <taxon>Mimivirus</taxon>
        <taxon>Mimivirus bradfordmassiliense</taxon>
    </lineage>
</organism>
<feature type="chain" id="PRO_0000243994" description="Uncharacterized protein L146">
    <location>
        <begin position="1"/>
        <end position="346"/>
    </location>
</feature>
<reference key="1">
    <citation type="journal article" date="2004" name="Science">
        <title>The 1.2-megabase genome sequence of Mimivirus.</title>
        <authorList>
            <person name="Raoult D."/>
            <person name="Audic S."/>
            <person name="Robert C."/>
            <person name="Abergel C."/>
            <person name="Renesto P."/>
            <person name="Ogata H."/>
            <person name="La Scola B."/>
            <person name="Susan M."/>
            <person name="Claverie J.-M."/>
        </authorList>
    </citation>
    <scope>NUCLEOTIDE SEQUENCE [LARGE SCALE GENOMIC DNA]</scope>
    <source>
        <strain>Rowbotham-Bradford</strain>
    </source>
</reference>
<keyword id="KW-1185">Reference proteome</keyword>
<dbReference type="EMBL" id="AY653733">
    <property type="protein sequence ID" value="AAV50421.1"/>
    <property type="molecule type" value="Genomic_DNA"/>
</dbReference>
<dbReference type="SMR" id="Q5URA2"/>
<dbReference type="KEGG" id="vg:9924746"/>
<dbReference type="Proteomes" id="UP000001134">
    <property type="component" value="Genome"/>
</dbReference>
<name>YL146_MIMIV</name>